<dbReference type="EMBL" id="CP000958">
    <property type="protein sequence ID" value="ACA92024.1"/>
    <property type="molecule type" value="Genomic_DNA"/>
</dbReference>
<dbReference type="RefSeq" id="WP_006477723.1">
    <property type="nucleotide sequence ID" value="NC_010508.1"/>
</dbReference>
<dbReference type="SMR" id="B1JZ58"/>
<dbReference type="GeneID" id="83049648"/>
<dbReference type="KEGG" id="bcm:Bcenmc03_2865"/>
<dbReference type="HOGENOM" id="CLU_111574_1_0_4"/>
<dbReference type="Proteomes" id="UP000002169">
    <property type="component" value="Chromosome 1"/>
</dbReference>
<dbReference type="GO" id="GO:0005737">
    <property type="term" value="C:cytoplasm"/>
    <property type="evidence" value="ECO:0007669"/>
    <property type="project" value="UniProtKB-SubCell"/>
</dbReference>
<dbReference type="GO" id="GO:0051082">
    <property type="term" value="F:unfolded protein binding"/>
    <property type="evidence" value="ECO:0007669"/>
    <property type="project" value="InterPro"/>
</dbReference>
<dbReference type="GO" id="GO:0006457">
    <property type="term" value="P:protein folding"/>
    <property type="evidence" value="ECO:0007669"/>
    <property type="project" value="UniProtKB-UniRule"/>
</dbReference>
<dbReference type="GO" id="GO:0051262">
    <property type="term" value="P:protein tetramerization"/>
    <property type="evidence" value="ECO:0007669"/>
    <property type="project" value="InterPro"/>
</dbReference>
<dbReference type="GO" id="GO:0015031">
    <property type="term" value="P:protein transport"/>
    <property type="evidence" value="ECO:0007669"/>
    <property type="project" value="UniProtKB-UniRule"/>
</dbReference>
<dbReference type="Gene3D" id="3.10.420.10">
    <property type="entry name" value="SecB-like"/>
    <property type="match status" value="1"/>
</dbReference>
<dbReference type="HAMAP" id="MF_00821">
    <property type="entry name" value="SecB"/>
    <property type="match status" value="1"/>
</dbReference>
<dbReference type="InterPro" id="IPR003708">
    <property type="entry name" value="SecB"/>
</dbReference>
<dbReference type="InterPro" id="IPR035958">
    <property type="entry name" value="SecB-like_sf"/>
</dbReference>
<dbReference type="NCBIfam" id="NF004392">
    <property type="entry name" value="PRK05751.1-3"/>
    <property type="match status" value="1"/>
</dbReference>
<dbReference type="NCBIfam" id="NF004394">
    <property type="entry name" value="PRK05751.1-5"/>
    <property type="match status" value="1"/>
</dbReference>
<dbReference type="NCBIfam" id="TIGR00809">
    <property type="entry name" value="secB"/>
    <property type="match status" value="1"/>
</dbReference>
<dbReference type="PANTHER" id="PTHR36918">
    <property type="match status" value="1"/>
</dbReference>
<dbReference type="PANTHER" id="PTHR36918:SF1">
    <property type="entry name" value="PROTEIN-EXPORT PROTEIN SECB"/>
    <property type="match status" value="1"/>
</dbReference>
<dbReference type="Pfam" id="PF02556">
    <property type="entry name" value="SecB"/>
    <property type="match status" value="1"/>
</dbReference>
<dbReference type="PRINTS" id="PR01594">
    <property type="entry name" value="SECBCHAPRONE"/>
</dbReference>
<dbReference type="SUPFAM" id="SSF54611">
    <property type="entry name" value="SecB-like"/>
    <property type="match status" value="1"/>
</dbReference>
<feature type="chain" id="PRO_1000134366" description="Protein-export protein SecB">
    <location>
        <begin position="1"/>
        <end position="164"/>
    </location>
</feature>
<comment type="function">
    <text evidence="1">One of the proteins required for the normal export of preproteins out of the cell cytoplasm. It is a molecular chaperone that binds to a subset of precursor proteins, maintaining them in a translocation-competent state. It also specifically binds to its receptor SecA.</text>
</comment>
<comment type="subunit">
    <text evidence="1">Homotetramer, a dimer of dimers. One homotetramer interacts with 1 SecA dimer.</text>
</comment>
<comment type="subcellular location">
    <subcellularLocation>
        <location evidence="1">Cytoplasm</location>
    </subcellularLocation>
</comment>
<comment type="similarity">
    <text evidence="1">Belongs to the SecB family.</text>
</comment>
<name>SECB_BURO0</name>
<sequence length="164" mass="17897">MSDVENQPFFNIQRVYLKDMSLEQPNSPAIFLEQDMPSVEVEVDVKADRLAESVFEVVVSGTVTAKVKDKVAFLIEAKQAGIFDIRNIPDEQLDPLVGIACPTILFPYLRSNIADAITRAGFPPIHLAEINFQALYEQRLAQLQQQAGAAAGAPNGAPNGTTLN</sequence>
<evidence type="ECO:0000255" key="1">
    <source>
        <dbReference type="HAMAP-Rule" id="MF_00821"/>
    </source>
</evidence>
<protein>
    <recommendedName>
        <fullName evidence="1">Protein-export protein SecB</fullName>
    </recommendedName>
</protein>
<gene>
    <name evidence="1" type="primary">secB</name>
    <name type="ordered locus">Bcenmc03_2865</name>
</gene>
<accession>B1JZ58</accession>
<reference key="1">
    <citation type="submission" date="2008-02" db="EMBL/GenBank/DDBJ databases">
        <title>Complete sequence of chromosome 1 of Burkholderia cenocepacia MC0-3.</title>
        <authorList>
            <person name="Copeland A."/>
            <person name="Lucas S."/>
            <person name="Lapidus A."/>
            <person name="Barry K."/>
            <person name="Bruce D."/>
            <person name="Goodwin L."/>
            <person name="Glavina del Rio T."/>
            <person name="Dalin E."/>
            <person name="Tice H."/>
            <person name="Pitluck S."/>
            <person name="Chain P."/>
            <person name="Malfatti S."/>
            <person name="Shin M."/>
            <person name="Vergez L."/>
            <person name="Schmutz J."/>
            <person name="Larimer F."/>
            <person name="Land M."/>
            <person name="Hauser L."/>
            <person name="Kyrpides N."/>
            <person name="Mikhailova N."/>
            <person name="Tiedje J."/>
            <person name="Richardson P."/>
        </authorList>
    </citation>
    <scope>NUCLEOTIDE SEQUENCE [LARGE SCALE GENOMIC DNA]</scope>
    <source>
        <strain>MC0-3</strain>
    </source>
</reference>
<organism>
    <name type="scientific">Burkholderia orbicola (strain MC0-3)</name>
    <dbReference type="NCBI Taxonomy" id="406425"/>
    <lineage>
        <taxon>Bacteria</taxon>
        <taxon>Pseudomonadati</taxon>
        <taxon>Pseudomonadota</taxon>
        <taxon>Betaproteobacteria</taxon>
        <taxon>Burkholderiales</taxon>
        <taxon>Burkholderiaceae</taxon>
        <taxon>Burkholderia</taxon>
        <taxon>Burkholderia cepacia complex</taxon>
        <taxon>Burkholderia orbicola</taxon>
    </lineage>
</organism>
<keyword id="KW-0143">Chaperone</keyword>
<keyword id="KW-0963">Cytoplasm</keyword>
<keyword id="KW-0653">Protein transport</keyword>
<keyword id="KW-0811">Translocation</keyword>
<keyword id="KW-0813">Transport</keyword>
<proteinExistence type="inferred from homology"/>